<protein>
    <recommendedName>
        <fullName evidence="1">Probable transcriptional regulatory protein Rv2603c</fullName>
    </recommendedName>
</protein>
<dbReference type="EMBL" id="AL123456">
    <property type="protein sequence ID" value="CCP45400.1"/>
    <property type="molecule type" value="Genomic_DNA"/>
</dbReference>
<dbReference type="PIR" id="F70500">
    <property type="entry name" value="F70500"/>
</dbReference>
<dbReference type="RefSeq" id="NP_217119.1">
    <property type="nucleotide sequence ID" value="NC_000962.3"/>
</dbReference>
<dbReference type="RefSeq" id="WP_003413464.1">
    <property type="nucleotide sequence ID" value="NZ_NVQJ01000023.1"/>
</dbReference>
<dbReference type="SMR" id="P9WGA5"/>
<dbReference type="FunCoup" id="P9WGA5">
    <property type="interactions" value="338"/>
</dbReference>
<dbReference type="STRING" id="83332.Rv2603c"/>
<dbReference type="PaxDb" id="83332-Rv2603c"/>
<dbReference type="DNASU" id="887369"/>
<dbReference type="GeneID" id="887369"/>
<dbReference type="KEGG" id="mtu:Rv2603c"/>
<dbReference type="KEGG" id="mtv:RVBD_2603c"/>
<dbReference type="TubercuList" id="Rv2603c"/>
<dbReference type="eggNOG" id="COG0217">
    <property type="taxonomic scope" value="Bacteria"/>
</dbReference>
<dbReference type="InParanoid" id="P9WGA5"/>
<dbReference type="OrthoDB" id="9781053at2"/>
<dbReference type="PhylomeDB" id="P9WGA5"/>
<dbReference type="Proteomes" id="UP000001584">
    <property type="component" value="Chromosome"/>
</dbReference>
<dbReference type="GO" id="GO:0005829">
    <property type="term" value="C:cytosol"/>
    <property type="evidence" value="ECO:0000318"/>
    <property type="project" value="GO_Central"/>
</dbReference>
<dbReference type="GO" id="GO:0003677">
    <property type="term" value="F:DNA binding"/>
    <property type="evidence" value="ECO:0007669"/>
    <property type="project" value="UniProtKB-UniRule"/>
</dbReference>
<dbReference type="GO" id="GO:0006355">
    <property type="term" value="P:regulation of DNA-templated transcription"/>
    <property type="evidence" value="ECO:0007669"/>
    <property type="project" value="UniProtKB-UniRule"/>
</dbReference>
<dbReference type="FunFam" id="1.10.10.200:FF:000002">
    <property type="entry name" value="Probable transcriptional regulatory protein CLM62_37755"/>
    <property type="match status" value="1"/>
</dbReference>
<dbReference type="FunFam" id="3.30.70.980:FF:000006">
    <property type="entry name" value="Probable transcriptional regulatory protein J113_18170"/>
    <property type="match status" value="1"/>
</dbReference>
<dbReference type="Gene3D" id="1.10.10.200">
    <property type="match status" value="1"/>
</dbReference>
<dbReference type="Gene3D" id="3.30.70.980">
    <property type="match status" value="2"/>
</dbReference>
<dbReference type="HAMAP" id="MF_00693">
    <property type="entry name" value="Transcrip_reg_TACO1"/>
    <property type="match status" value="1"/>
</dbReference>
<dbReference type="InterPro" id="IPR017856">
    <property type="entry name" value="Integrase-like_N"/>
</dbReference>
<dbReference type="InterPro" id="IPR048300">
    <property type="entry name" value="TACO1_YebC-like_2nd/3rd_dom"/>
</dbReference>
<dbReference type="InterPro" id="IPR049083">
    <property type="entry name" value="TACO1_YebC_N"/>
</dbReference>
<dbReference type="InterPro" id="IPR002876">
    <property type="entry name" value="Transcrip_reg_TACO1-like"/>
</dbReference>
<dbReference type="InterPro" id="IPR026564">
    <property type="entry name" value="Transcrip_reg_TACO1-like_dom3"/>
</dbReference>
<dbReference type="InterPro" id="IPR029072">
    <property type="entry name" value="YebC-like"/>
</dbReference>
<dbReference type="NCBIfam" id="NF001030">
    <property type="entry name" value="PRK00110.1"/>
    <property type="match status" value="1"/>
</dbReference>
<dbReference type="NCBIfam" id="NF009044">
    <property type="entry name" value="PRK12378.1"/>
    <property type="match status" value="1"/>
</dbReference>
<dbReference type="NCBIfam" id="TIGR01033">
    <property type="entry name" value="YebC/PmpR family DNA-binding transcriptional regulator"/>
    <property type="match status" value="1"/>
</dbReference>
<dbReference type="PANTHER" id="PTHR12532:SF6">
    <property type="entry name" value="TRANSCRIPTIONAL REGULATORY PROTEIN YEBC-RELATED"/>
    <property type="match status" value="1"/>
</dbReference>
<dbReference type="PANTHER" id="PTHR12532">
    <property type="entry name" value="TRANSLATIONAL ACTIVATOR OF CYTOCHROME C OXIDASE 1"/>
    <property type="match status" value="1"/>
</dbReference>
<dbReference type="Pfam" id="PF20772">
    <property type="entry name" value="TACO1_YebC_N"/>
    <property type="match status" value="1"/>
</dbReference>
<dbReference type="Pfam" id="PF01709">
    <property type="entry name" value="Transcrip_reg"/>
    <property type="match status" value="1"/>
</dbReference>
<dbReference type="SUPFAM" id="SSF75625">
    <property type="entry name" value="YebC-like"/>
    <property type="match status" value="1"/>
</dbReference>
<comment type="subcellular location">
    <subcellularLocation>
        <location evidence="1">Cytoplasm</location>
    </subcellularLocation>
</comment>
<comment type="similarity">
    <text evidence="1">Belongs to the TACO1 family.</text>
</comment>
<accession>P9WGA5</accession>
<accession>L0TA55</accession>
<accession>O33214</accession>
<accession>P67177</accession>
<reference key="1">
    <citation type="journal article" date="1998" name="Nature">
        <title>Deciphering the biology of Mycobacterium tuberculosis from the complete genome sequence.</title>
        <authorList>
            <person name="Cole S.T."/>
            <person name="Brosch R."/>
            <person name="Parkhill J."/>
            <person name="Garnier T."/>
            <person name="Churcher C.M."/>
            <person name="Harris D.E."/>
            <person name="Gordon S.V."/>
            <person name="Eiglmeier K."/>
            <person name="Gas S."/>
            <person name="Barry C.E. III"/>
            <person name="Tekaia F."/>
            <person name="Badcock K."/>
            <person name="Basham D."/>
            <person name="Brown D."/>
            <person name="Chillingworth T."/>
            <person name="Connor R."/>
            <person name="Davies R.M."/>
            <person name="Devlin K."/>
            <person name="Feltwell T."/>
            <person name="Gentles S."/>
            <person name="Hamlin N."/>
            <person name="Holroyd S."/>
            <person name="Hornsby T."/>
            <person name="Jagels K."/>
            <person name="Krogh A."/>
            <person name="McLean J."/>
            <person name="Moule S."/>
            <person name="Murphy L.D."/>
            <person name="Oliver S."/>
            <person name="Osborne J."/>
            <person name="Quail M.A."/>
            <person name="Rajandream M.A."/>
            <person name="Rogers J."/>
            <person name="Rutter S."/>
            <person name="Seeger K."/>
            <person name="Skelton S."/>
            <person name="Squares S."/>
            <person name="Squares R."/>
            <person name="Sulston J.E."/>
            <person name="Taylor K."/>
            <person name="Whitehead S."/>
            <person name="Barrell B.G."/>
        </authorList>
    </citation>
    <scope>NUCLEOTIDE SEQUENCE [LARGE SCALE GENOMIC DNA]</scope>
    <source>
        <strain>ATCC 25618 / H37Rv</strain>
    </source>
</reference>
<reference key="2">
    <citation type="journal article" date="2011" name="Mol. Cell. Proteomics">
        <title>Proteogenomic analysis of Mycobacterium tuberculosis by high resolution mass spectrometry.</title>
        <authorList>
            <person name="Kelkar D.S."/>
            <person name="Kumar D."/>
            <person name="Kumar P."/>
            <person name="Balakrishnan L."/>
            <person name="Muthusamy B."/>
            <person name="Yadav A.K."/>
            <person name="Shrivastava P."/>
            <person name="Marimuthu A."/>
            <person name="Anand S."/>
            <person name="Sundaram H."/>
            <person name="Kingsbury R."/>
            <person name="Harsha H.C."/>
            <person name="Nair B."/>
            <person name="Prasad T.S."/>
            <person name="Chauhan D.S."/>
            <person name="Katoch K."/>
            <person name="Katoch V.M."/>
            <person name="Kumar P."/>
            <person name="Chaerkady R."/>
            <person name="Ramachandran S."/>
            <person name="Dash D."/>
            <person name="Pandey A."/>
        </authorList>
    </citation>
    <scope>IDENTIFICATION BY MASS SPECTROMETRY [LARGE SCALE ANALYSIS]</scope>
    <source>
        <strain>ATCC 25618 / H37Rv</strain>
    </source>
</reference>
<gene>
    <name type="ordered locus">Rv2603c</name>
    <name type="ORF">MTCI270A.02</name>
</gene>
<name>Y2603_MYCTU</name>
<evidence type="ECO:0000255" key="1">
    <source>
        <dbReference type="HAMAP-Rule" id="MF_00693"/>
    </source>
</evidence>
<feature type="chain" id="PRO_0000175853" description="Probable transcriptional regulatory protein Rv2603c">
    <location>
        <begin position="1"/>
        <end position="251"/>
    </location>
</feature>
<proteinExistence type="evidence at protein level"/>
<organism>
    <name type="scientific">Mycobacterium tuberculosis (strain ATCC 25618 / H37Rv)</name>
    <dbReference type="NCBI Taxonomy" id="83332"/>
    <lineage>
        <taxon>Bacteria</taxon>
        <taxon>Bacillati</taxon>
        <taxon>Actinomycetota</taxon>
        <taxon>Actinomycetes</taxon>
        <taxon>Mycobacteriales</taxon>
        <taxon>Mycobacteriaceae</taxon>
        <taxon>Mycobacterium</taxon>
        <taxon>Mycobacterium tuberculosis complex</taxon>
    </lineage>
</organism>
<keyword id="KW-0963">Cytoplasm</keyword>
<keyword id="KW-0238">DNA-binding</keyword>
<keyword id="KW-1185">Reference proteome</keyword>
<keyword id="KW-0804">Transcription</keyword>
<keyword id="KW-0805">Transcription regulation</keyword>
<sequence length="251" mass="26799">MSGHSKWATTKHKKAVVDARRGKMFARLIKNIEVAARVGGGDPAGNPTLYDAIQKAKKSSVPNENIERARKRGAGEEAGGADWQTIMYEGYAPNGVAVLIECLTDNRNRAASEVRVAMTRNGGTMADPGSVSYLFSRKGVVTLEKNGLTEDDVLAAVLEAGAEDVNDLGDSFEVISEPAELVAVRSALQDAGIDYESAEASFQPSVSVPVDLDGARKVFKLVDALEDSDDVQNVWTNVDVSDEVLAALDDE</sequence>